<reference key="1">
    <citation type="submission" date="2005-01" db="EMBL/GenBank/DDBJ databases">
        <authorList>
            <consortium name="NIH - Xenopus Gene Collection (XGC) project"/>
        </authorList>
    </citation>
    <scope>NUCLEOTIDE SEQUENCE [LARGE SCALE MRNA]</scope>
    <source>
        <tissue>Egg</tissue>
    </source>
</reference>
<dbReference type="EMBL" id="BC053825">
    <property type="protein sequence ID" value="AAH53825.1"/>
    <property type="molecule type" value="mRNA"/>
</dbReference>
<dbReference type="EMBL" id="BC088921">
    <property type="protein sequence ID" value="AAH88921.1"/>
    <property type="molecule type" value="mRNA"/>
</dbReference>
<dbReference type="RefSeq" id="NP_001082661.1">
    <property type="nucleotide sequence ID" value="NM_001089192.1"/>
</dbReference>
<dbReference type="GlyCosmos" id="Q5HZQ9">
    <property type="glycosylation" value="5 sites, No reported glycans"/>
</dbReference>
<dbReference type="DNASU" id="398632"/>
<dbReference type="GeneID" id="398632"/>
<dbReference type="KEGG" id="xla:398632"/>
<dbReference type="AGR" id="Xenbase:XB-GENE-951153"/>
<dbReference type="CTD" id="398632"/>
<dbReference type="Xenbase" id="XB-GENE-951153">
    <property type="gene designation" value="pcnx4.L"/>
</dbReference>
<dbReference type="OrthoDB" id="5979286at2759"/>
<dbReference type="Proteomes" id="UP000186698">
    <property type="component" value="Chromosome 8L"/>
</dbReference>
<dbReference type="Bgee" id="398632">
    <property type="expression patterns" value="Expressed in egg cell and 19 other cell types or tissues"/>
</dbReference>
<dbReference type="GO" id="GO:0016020">
    <property type="term" value="C:membrane"/>
    <property type="evidence" value="ECO:0007669"/>
    <property type="project" value="UniProtKB-SubCell"/>
</dbReference>
<dbReference type="InterPro" id="IPR039797">
    <property type="entry name" value="Pecanex"/>
</dbReference>
<dbReference type="InterPro" id="IPR007735">
    <property type="entry name" value="Pecanex_C"/>
</dbReference>
<dbReference type="PANTHER" id="PTHR12372">
    <property type="entry name" value="PECANEX"/>
    <property type="match status" value="1"/>
</dbReference>
<dbReference type="PANTHER" id="PTHR12372:SF6">
    <property type="entry name" value="PECANEX-LIKE PROTEIN 4"/>
    <property type="match status" value="1"/>
</dbReference>
<dbReference type="Pfam" id="PF05041">
    <property type="entry name" value="Pecanex_C"/>
    <property type="match status" value="1"/>
</dbReference>
<gene>
    <name evidence="1" type="primary">pcnx4</name>
    <name type="synonym">pcnxl4</name>
</gene>
<feature type="chain" id="PRO_0000339369" description="Pecanex-like protein 4">
    <location>
        <begin position="1"/>
        <end position="1184"/>
    </location>
</feature>
<feature type="transmembrane region" description="Helical" evidence="2">
    <location>
        <begin position="40"/>
        <end position="60"/>
    </location>
</feature>
<feature type="transmembrane region" description="Helical" evidence="2">
    <location>
        <begin position="73"/>
        <end position="93"/>
    </location>
</feature>
<feature type="transmembrane region" description="Helical" evidence="2">
    <location>
        <begin position="141"/>
        <end position="161"/>
    </location>
</feature>
<feature type="transmembrane region" description="Helical" evidence="2">
    <location>
        <begin position="166"/>
        <end position="186"/>
    </location>
</feature>
<feature type="transmembrane region" description="Helical" evidence="2">
    <location>
        <begin position="218"/>
        <end position="238"/>
    </location>
</feature>
<feature type="transmembrane region" description="Helical" evidence="2">
    <location>
        <begin position="244"/>
        <end position="264"/>
    </location>
</feature>
<feature type="transmembrane region" description="Helical" evidence="2">
    <location>
        <begin position="305"/>
        <end position="325"/>
    </location>
</feature>
<feature type="transmembrane region" description="Helical" evidence="2">
    <location>
        <begin position="366"/>
        <end position="386"/>
    </location>
</feature>
<feature type="transmembrane region" description="Helical" evidence="2">
    <location>
        <begin position="391"/>
        <end position="411"/>
    </location>
</feature>
<feature type="transmembrane region" description="Helical" evidence="2">
    <location>
        <begin position="455"/>
        <end position="475"/>
    </location>
</feature>
<feature type="transmembrane region" description="Helical" evidence="2">
    <location>
        <begin position="502"/>
        <end position="522"/>
    </location>
</feature>
<feature type="transmembrane region" description="Helical" evidence="2">
    <location>
        <begin position="573"/>
        <end position="593"/>
    </location>
</feature>
<feature type="region of interest" description="Disordered" evidence="3">
    <location>
        <begin position="788"/>
        <end position="820"/>
    </location>
</feature>
<feature type="glycosylation site" description="N-linked (GlcNAc...) asparagine" evidence="2">
    <location>
        <position position="523"/>
    </location>
</feature>
<feature type="glycosylation site" description="N-linked (GlcNAc...) asparagine" evidence="2">
    <location>
        <position position="848"/>
    </location>
</feature>
<feature type="glycosylation site" description="N-linked (GlcNAc...) asparagine" evidence="2">
    <location>
        <position position="915"/>
    </location>
</feature>
<feature type="glycosylation site" description="N-linked (GlcNAc...) asparagine" evidence="2">
    <location>
        <position position="1132"/>
    </location>
</feature>
<feature type="glycosylation site" description="N-linked (GlcNAc...) asparagine" evidence="2">
    <location>
        <position position="1159"/>
    </location>
</feature>
<organism>
    <name type="scientific">Xenopus laevis</name>
    <name type="common">African clawed frog</name>
    <dbReference type="NCBI Taxonomy" id="8355"/>
    <lineage>
        <taxon>Eukaryota</taxon>
        <taxon>Metazoa</taxon>
        <taxon>Chordata</taxon>
        <taxon>Craniata</taxon>
        <taxon>Vertebrata</taxon>
        <taxon>Euteleostomi</taxon>
        <taxon>Amphibia</taxon>
        <taxon>Batrachia</taxon>
        <taxon>Anura</taxon>
        <taxon>Pipoidea</taxon>
        <taxon>Pipidae</taxon>
        <taxon>Xenopodinae</taxon>
        <taxon>Xenopus</taxon>
        <taxon>Xenopus</taxon>
    </lineage>
</organism>
<name>PCX4_XENLA</name>
<proteinExistence type="evidence at transcript level"/>
<comment type="subcellular location">
    <subcellularLocation>
        <location evidence="4">Membrane</location>
        <topology evidence="4">Multi-pass membrane protein</topology>
    </subcellularLocation>
</comment>
<comment type="similarity">
    <text evidence="4">Belongs to the pecanex family.</text>
</comment>
<keyword id="KW-0325">Glycoprotein</keyword>
<keyword id="KW-0472">Membrane</keyword>
<keyword id="KW-1185">Reference proteome</keyword>
<keyword id="KW-0812">Transmembrane</keyword>
<keyword id="KW-1133">Transmembrane helix</keyword>
<protein>
    <recommendedName>
        <fullName>Pecanex-like protein 4</fullName>
    </recommendedName>
    <alternativeName>
        <fullName evidence="1">Pecanex homolog protein 4</fullName>
    </alternativeName>
</protein>
<sequence length="1184" mass="134032">MGPDVPLLNEYKQEFFWKRFPQTVLGGPRFKLGYSAPPYIYINQAILFLIPWLLGGAGTVLGEVKVLQDYYTAVFSGGLMLIAAFIIQLLNLYARKKTSTVERLQNQNTLTDEDEYDFNSCLGSETIKFVIPGKKFIANTIFHSLVAGVLCGLGTWYLLPYRLNLLYGNIGGTVMIFIFGWLTICIGEYSLIVNSATETATFHAQDTYEITALLRPAYIFAFIAVDLADRFIVTVPALQLANQVLHVVFLFLPFLWALGILPPLDALVLWGMEQTLEFVLGGSPMSSNLRVLILFIISAATTISAYFIPNSVGLVLFIAGLGFILSLDLTEMCIVLKHHLKRLSPFMKSTSPASLHWQLSWKEPTVYFVILLLILLEASLLHYFAYSAFSISSAQAIVSYCLIILLVSLWILKEMQGAYILGIIRNPFFQSDIRMLNDFMKKQSRLRKVAVARRILLTLVSPFAMVAYLSLDTSLYNLHSASVCIGFTRAYRTIWQNTENALFEMVIVSIVQLLVFNTSVWWNVSLDTGIRLLLIAFIRDRLCQLVSKLQFAITVLLTSWTEKKQRRKSSTSLITVNIIFFPFVLSFVILSAVLSSPLLALFTLPVFLVGFPRPVRSWPGAVGASACFCTDTVYYQQMVPGLVAALQSAFASGSLGLVTPGSHFLCRFQDRLIWLLVLERGYTYCCVNIKGLELQETSCHTAEARRVDEVFEMAFEQAESAGIFALNHHFGNIMTPCTVVPVRLYSDARNVLSGIIDSHENLRQFRDDFIKVLLWVLINSCYRNSKSHKSMDVDENEENMPAPSKTQAQTGSDPIAGNPDELKAAENIHEDFDEWSDDDIFEILPRTNKTGIRPIVAFTGDKLSIPGCVEMKHVDNSVEQDIAVDKLYSVVGFGFPAIDKGKQTLTEHFNMVPFNSSYSRFLRIPQDWIFVSLPQLKLNEMKQMFPRDWYEFIFTQLDFHHLNEKPSTVQDELSKDSCLQDQFIQGLSSIYFAFFGMENLVPSSAWLFRAYLGGMPWSVSLDWLTGRPELFQLALKAFRYTFKLMVDKSSLGQVEDFKELINYLEEYDNDWYIGLASDMEWQQAVLQEKPYLFSLGHDPNMGVYTGRVLTLQEQLVQIGKLNAEAVRGQWANLSWELLYATNDDEERYSIQAHPILLRNLTVQAADPPLGYPIYSSVPLHVPLY</sequence>
<accession>Q5HZQ9</accession>
<accession>Q7SZ69</accession>
<evidence type="ECO:0000250" key="1">
    <source>
        <dbReference type="UniProtKB" id="Q63HM2"/>
    </source>
</evidence>
<evidence type="ECO:0000255" key="2"/>
<evidence type="ECO:0000256" key="3">
    <source>
        <dbReference type="SAM" id="MobiDB-lite"/>
    </source>
</evidence>
<evidence type="ECO:0000305" key="4"/>